<feature type="chain" id="PRO_0000350951" description="Cell division cycle protein 123">
    <location>
        <begin position="1"/>
        <end position="371"/>
    </location>
</feature>
<feature type="region of interest" description="Disordered" evidence="2">
    <location>
        <begin position="334"/>
        <end position="371"/>
    </location>
</feature>
<feature type="compositionally biased region" description="Polar residues" evidence="2">
    <location>
        <begin position="349"/>
        <end position="371"/>
    </location>
</feature>
<name>CD123_YARLI</name>
<protein>
    <recommendedName>
        <fullName>Cell division cycle protein 123</fullName>
    </recommendedName>
</protein>
<organism>
    <name type="scientific">Yarrowia lipolytica (strain CLIB 122 / E 150)</name>
    <name type="common">Yeast</name>
    <name type="synonym">Candida lipolytica</name>
    <dbReference type="NCBI Taxonomy" id="284591"/>
    <lineage>
        <taxon>Eukaryota</taxon>
        <taxon>Fungi</taxon>
        <taxon>Dikarya</taxon>
        <taxon>Ascomycota</taxon>
        <taxon>Saccharomycotina</taxon>
        <taxon>Dipodascomycetes</taxon>
        <taxon>Dipodascales</taxon>
        <taxon>Dipodascales incertae sedis</taxon>
        <taxon>Yarrowia</taxon>
    </lineage>
</organism>
<evidence type="ECO:0000250" key="1"/>
<evidence type="ECO:0000256" key="2">
    <source>
        <dbReference type="SAM" id="MobiDB-lite"/>
    </source>
</evidence>
<evidence type="ECO:0000305" key="3"/>
<gene>
    <name type="primary">CDC123</name>
    <name type="ordered locus">YALI0F20394g</name>
</gene>
<reference key="1">
    <citation type="journal article" date="2004" name="Nature">
        <title>Genome evolution in yeasts.</title>
        <authorList>
            <person name="Dujon B."/>
            <person name="Sherman D."/>
            <person name="Fischer G."/>
            <person name="Durrens P."/>
            <person name="Casaregola S."/>
            <person name="Lafontaine I."/>
            <person name="de Montigny J."/>
            <person name="Marck C."/>
            <person name="Neuveglise C."/>
            <person name="Talla E."/>
            <person name="Goffard N."/>
            <person name="Frangeul L."/>
            <person name="Aigle M."/>
            <person name="Anthouard V."/>
            <person name="Babour A."/>
            <person name="Barbe V."/>
            <person name="Barnay S."/>
            <person name="Blanchin S."/>
            <person name="Beckerich J.-M."/>
            <person name="Beyne E."/>
            <person name="Bleykasten C."/>
            <person name="Boisrame A."/>
            <person name="Boyer J."/>
            <person name="Cattolico L."/>
            <person name="Confanioleri F."/>
            <person name="de Daruvar A."/>
            <person name="Despons L."/>
            <person name="Fabre E."/>
            <person name="Fairhead C."/>
            <person name="Ferry-Dumazet H."/>
            <person name="Groppi A."/>
            <person name="Hantraye F."/>
            <person name="Hennequin C."/>
            <person name="Jauniaux N."/>
            <person name="Joyet P."/>
            <person name="Kachouri R."/>
            <person name="Kerrest A."/>
            <person name="Koszul R."/>
            <person name="Lemaire M."/>
            <person name="Lesur I."/>
            <person name="Ma L."/>
            <person name="Muller H."/>
            <person name="Nicaud J.-M."/>
            <person name="Nikolski M."/>
            <person name="Oztas S."/>
            <person name="Ozier-Kalogeropoulos O."/>
            <person name="Pellenz S."/>
            <person name="Potier S."/>
            <person name="Richard G.-F."/>
            <person name="Straub M.-L."/>
            <person name="Suleau A."/>
            <person name="Swennen D."/>
            <person name="Tekaia F."/>
            <person name="Wesolowski-Louvel M."/>
            <person name="Westhof E."/>
            <person name="Wirth B."/>
            <person name="Zeniou-Meyer M."/>
            <person name="Zivanovic Y."/>
            <person name="Bolotin-Fukuhara M."/>
            <person name="Thierry A."/>
            <person name="Bouchier C."/>
            <person name="Caudron B."/>
            <person name="Scarpelli C."/>
            <person name="Gaillardin C."/>
            <person name="Weissenbach J."/>
            <person name="Wincker P."/>
            <person name="Souciet J.-L."/>
        </authorList>
    </citation>
    <scope>NUCLEOTIDE SEQUENCE [LARGE SCALE GENOMIC DNA]</scope>
    <source>
        <strain>CLIB 122 / E 150</strain>
    </source>
</reference>
<keyword id="KW-0131">Cell cycle</keyword>
<keyword id="KW-0132">Cell division</keyword>
<keyword id="KW-0963">Cytoplasm</keyword>
<keyword id="KW-1185">Reference proteome</keyword>
<proteinExistence type="inferred from homology"/>
<dbReference type="EMBL" id="CR382132">
    <property type="protein sequence ID" value="CAG78470.1"/>
    <property type="molecule type" value="Genomic_DNA"/>
</dbReference>
<dbReference type="RefSeq" id="XP_505661.1">
    <property type="nucleotide sequence ID" value="XM_505661.1"/>
</dbReference>
<dbReference type="SMR" id="Q6C101"/>
<dbReference type="FunCoup" id="Q6C101">
    <property type="interactions" value="771"/>
</dbReference>
<dbReference type="STRING" id="284591.Q6C101"/>
<dbReference type="EnsemblFungi" id="CAG78470">
    <property type="protein sequence ID" value="CAG78470"/>
    <property type="gene ID" value="YALI0_F20394g"/>
</dbReference>
<dbReference type="KEGG" id="yli:2907865"/>
<dbReference type="VEuPathDB" id="FungiDB:YALI0_F20394g"/>
<dbReference type="HOGENOM" id="CLU_034402_2_0_1"/>
<dbReference type="InParanoid" id="Q6C101"/>
<dbReference type="OMA" id="TFPDPNF"/>
<dbReference type="OrthoDB" id="113924at4891"/>
<dbReference type="Proteomes" id="UP000001300">
    <property type="component" value="Chromosome F"/>
</dbReference>
<dbReference type="GO" id="GO:0005737">
    <property type="term" value="C:cytoplasm"/>
    <property type="evidence" value="ECO:0000318"/>
    <property type="project" value="GO_Central"/>
</dbReference>
<dbReference type="GO" id="GO:0005524">
    <property type="term" value="F:ATP binding"/>
    <property type="evidence" value="ECO:0007669"/>
    <property type="project" value="EnsemblFungi"/>
</dbReference>
<dbReference type="GO" id="GO:0000287">
    <property type="term" value="F:magnesium ion binding"/>
    <property type="evidence" value="ECO:0007669"/>
    <property type="project" value="EnsemblFungi"/>
</dbReference>
<dbReference type="GO" id="GO:0044183">
    <property type="term" value="F:protein folding chaperone"/>
    <property type="evidence" value="ECO:0007669"/>
    <property type="project" value="EnsemblFungi"/>
</dbReference>
<dbReference type="GO" id="GO:0051301">
    <property type="term" value="P:cell division"/>
    <property type="evidence" value="ECO:0007669"/>
    <property type="project" value="UniProtKB-KW"/>
</dbReference>
<dbReference type="GO" id="GO:1905143">
    <property type="term" value="P:eukaryotic translation initiation factor 2 complex assembly"/>
    <property type="evidence" value="ECO:0007669"/>
    <property type="project" value="EnsemblFungi"/>
</dbReference>
<dbReference type="InterPro" id="IPR009772">
    <property type="entry name" value="CDC123"/>
</dbReference>
<dbReference type="PANTHER" id="PTHR15323:SF6">
    <property type="entry name" value="CELL DIVISION CYCLE PROTEIN 123 HOMOLOG"/>
    <property type="match status" value="1"/>
</dbReference>
<dbReference type="PANTHER" id="PTHR15323">
    <property type="entry name" value="D123 PROTEIN"/>
    <property type="match status" value="1"/>
</dbReference>
<dbReference type="Pfam" id="PF07065">
    <property type="entry name" value="D123"/>
    <property type="match status" value="1"/>
</dbReference>
<dbReference type="PIRSF" id="PIRSF007807">
    <property type="entry name" value="Cdc123"/>
    <property type="match status" value="1"/>
</dbReference>
<accession>Q6C101</accession>
<comment type="function">
    <text evidence="1">Regulates the cell cycle in a nutrient dependent manner.</text>
</comment>
<comment type="subcellular location">
    <subcellularLocation>
        <location evidence="1">Cytoplasm</location>
    </subcellularLocation>
</comment>
<comment type="similarity">
    <text evidence="3">Belongs to the CDC123 family.</text>
</comment>
<sequence length="371" mass="42506">MIINDKKDQETKVDDTTTLTLTREHLLNCQFSAWYKLYKSITPKTRIIKPLPEDFVNYLSEDGVILPDEEKTSYGSDSGVFEEYSDDEDELDSYVSKLDDFHPKVQAVIDEFGAVAPKLNWSSPQDAIWISPSNSTRCVTVNDVYLLLKSSDYIAHDLTMLDKLGGIPKDFSFELVLRKWININPALEFRCFVKDRELIAVTQRDQNYYEFLIKLKERFLGEIELFFYEHIKDTFPDSSFVFDVYIPEPYDKVWLMDFNVFYPTTDSLIEWSTLVNLDATSPSFDLDLLLIDKELRNASFACQRHSQNKVPMDIVNASMDTEAMVEMLRSQQREMDRLDGDQGGEASATGDTTGDSVANETTAANTTSQDS</sequence>